<evidence type="ECO:0000255" key="1">
    <source>
        <dbReference type="HAMAP-Rule" id="MF_00149"/>
    </source>
</evidence>
<gene>
    <name evidence="1" type="primary">mutL</name>
    <name type="ordered locus">CPE1156</name>
</gene>
<dbReference type="EMBL" id="BA000016">
    <property type="protein sequence ID" value="BAB80862.1"/>
    <property type="molecule type" value="Genomic_DNA"/>
</dbReference>
<dbReference type="RefSeq" id="WP_011010290.1">
    <property type="nucleotide sequence ID" value="NC_003366.1"/>
</dbReference>
<dbReference type="SMR" id="Q8XL86"/>
<dbReference type="STRING" id="195102.gene:10490419"/>
<dbReference type="KEGG" id="cpe:CPE1156"/>
<dbReference type="HOGENOM" id="CLU_004131_4_1_9"/>
<dbReference type="Proteomes" id="UP000000818">
    <property type="component" value="Chromosome"/>
</dbReference>
<dbReference type="GO" id="GO:0032300">
    <property type="term" value="C:mismatch repair complex"/>
    <property type="evidence" value="ECO:0007669"/>
    <property type="project" value="InterPro"/>
</dbReference>
<dbReference type="GO" id="GO:0005524">
    <property type="term" value="F:ATP binding"/>
    <property type="evidence" value="ECO:0007669"/>
    <property type="project" value="InterPro"/>
</dbReference>
<dbReference type="GO" id="GO:0016887">
    <property type="term" value="F:ATP hydrolysis activity"/>
    <property type="evidence" value="ECO:0007669"/>
    <property type="project" value="InterPro"/>
</dbReference>
<dbReference type="GO" id="GO:0140664">
    <property type="term" value="F:ATP-dependent DNA damage sensor activity"/>
    <property type="evidence" value="ECO:0007669"/>
    <property type="project" value="InterPro"/>
</dbReference>
<dbReference type="GO" id="GO:0030983">
    <property type="term" value="F:mismatched DNA binding"/>
    <property type="evidence" value="ECO:0007669"/>
    <property type="project" value="InterPro"/>
</dbReference>
<dbReference type="GO" id="GO:0006298">
    <property type="term" value="P:mismatch repair"/>
    <property type="evidence" value="ECO:0007669"/>
    <property type="project" value="UniProtKB-UniRule"/>
</dbReference>
<dbReference type="CDD" id="cd16926">
    <property type="entry name" value="HATPase_MutL-MLH-PMS-like"/>
    <property type="match status" value="1"/>
</dbReference>
<dbReference type="CDD" id="cd00782">
    <property type="entry name" value="MutL_Trans"/>
    <property type="match status" value="1"/>
</dbReference>
<dbReference type="FunFam" id="3.30.565.10:FF:000003">
    <property type="entry name" value="DNA mismatch repair endonuclease MutL"/>
    <property type="match status" value="1"/>
</dbReference>
<dbReference type="Gene3D" id="3.30.230.10">
    <property type="match status" value="1"/>
</dbReference>
<dbReference type="Gene3D" id="3.30.565.10">
    <property type="entry name" value="Histidine kinase-like ATPase, C-terminal domain"/>
    <property type="match status" value="1"/>
</dbReference>
<dbReference type="Gene3D" id="3.30.1540.20">
    <property type="entry name" value="MutL, C-terminal domain, dimerisation subdomain"/>
    <property type="match status" value="1"/>
</dbReference>
<dbReference type="Gene3D" id="3.30.1370.100">
    <property type="entry name" value="MutL, C-terminal domain, regulatory subdomain"/>
    <property type="match status" value="1"/>
</dbReference>
<dbReference type="HAMAP" id="MF_00149">
    <property type="entry name" value="DNA_mis_repair"/>
    <property type="match status" value="1"/>
</dbReference>
<dbReference type="InterPro" id="IPR014762">
    <property type="entry name" value="DNA_mismatch_repair_CS"/>
</dbReference>
<dbReference type="InterPro" id="IPR020667">
    <property type="entry name" value="DNA_mismatch_repair_MutL"/>
</dbReference>
<dbReference type="InterPro" id="IPR013507">
    <property type="entry name" value="DNA_mismatch_S5_2-like"/>
</dbReference>
<dbReference type="InterPro" id="IPR036890">
    <property type="entry name" value="HATPase_C_sf"/>
</dbReference>
<dbReference type="InterPro" id="IPR002099">
    <property type="entry name" value="MutL/Mlh/PMS"/>
</dbReference>
<dbReference type="InterPro" id="IPR038973">
    <property type="entry name" value="MutL/Mlh/Pms-like"/>
</dbReference>
<dbReference type="InterPro" id="IPR014790">
    <property type="entry name" value="MutL_C"/>
</dbReference>
<dbReference type="InterPro" id="IPR042120">
    <property type="entry name" value="MutL_C_dimsub"/>
</dbReference>
<dbReference type="InterPro" id="IPR042121">
    <property type="entry name" value="MutL_C_regsub"/>
</dbReference>
<dbReference type="InterPro" id="IPR037198">
    <property type="entry name" value="MutL_C_sf"/>
</dbReference>
<dbReference type="InterPro" id="IPR020568">
    <property type="entry name" value="Ribosomal_Su5_D2-typ_SF"/>
</dbReference>
<dbReference type="InterPro" id="IPR014721">
    <property type="entry name" value="Ribsml_uS5_D2-typ_fold_subgr"/>
</dbReference>
<dbReference type="NCBIfam" id="TIGR00585">
    <property type="entry name" value="mutl"/>
    <property type="match status" value="1"/>
</dbReference>
<dbReference type="PANTHER" id="PTHR10073">
    <property type="entry name" value="DNA MISMATCH REPAIR PROTEIN MLH, PMS, MUTL"/>
    <property type="match status" value="1"/>
</dbReference>
<dbReference type="PANTHER" id="PTHR10073:SF12">
    <property type="entry name" value="DNA MISMATCH REPAIR PROTEIN MLH1"/>
    <property type="match status" value="1"/>
</dbReference>
<dbReference type="Pfam" id="PF01119">
    <property type="entry name" value="DNA_mis_repair"/>
    <property type="match status" value="1"/>
</dbReference>
<dbReference type="Pfam" id="PF13589">
    <property type="entry name" value="HATPase_c_3"/>
    <property type="match status" value="1"/>
</dbReference>
<dbReference type="Pfam" id="PF08676">
    <property type="entry name" value="MutL_C"/>
    <property type="match status" value="1"/>
</dbReference>
<dbReference type="SMART" id="SM01340">
    <property type="entry name" value="DNA_mis_repair"/>
    <property type="match status" value="1"/>
</dbReference>
<dbReference type="SMART" id="SM00853">
    <property type="entry name" value="MutL_C"/>
    <property type="match status" value="1"/>
</dbReference>
<dbReference type="SUPFAM" id="SSF55874">
    <property type="entry name" value="ATPase domain of HSP90 chaperone/DNA topoisomerase II/histidine kinase"/>
    <property type="match status" value="1"/>
</dbReference>
<dbReference type="SUPFAM" id="SSF118116">
    <property type="entry name" value="DNA mismatch repair protein MutL"/>
    <property type="match status" value="1"/>
</dbReference>
<dbReference type="SUPFAM" id="SSF54211">
    <property type="entry name" value="Ribosomal protein S5 domain 2-like"/>
    <property type="match status" value="1"/>
</dbReference>
<dbReference type="PROSITE" id="PS00058">
    <property type="entry name" value="DNA_MISMATCH_REPAIR_1"/>
    <property type="match status" value="1"/>
</dbReference>
<reference key="1">
    <citation type="journal article" date="2002" name="Proc. Natl. Acad. Sci. U.S.A.">
        <title>Complete genome sequence of Clostridium perfringens, an anaerobic flesh-eater.</title>
        <authorList>
            <person name="Shimizu T."/>
            <person name="Ohtani K."/>
            <person name="Hirakawa H."/>
            <person name="Ohshima K."/>
            <person name="Yamashita A."/>
            <person name="Shiba T."/>
            <person name="Ogasawara N."/>
            <person name="Hattori M."/>
            <person name="Kuhara S."/>
            <person name="Hayashi H."/>
        </authorList>
    </citation>
    <scope>NUCLEOTIDE SEQUENCE [LARGE SCALE GENOMIC DNA]</scope>
    <source>
        <strain>13 / Type A</strain>
    </source>
</reference>
<sequence>MNRINILNADTANKIAAGEVVERPSSVVKELVENSLDAGAKNITIEIQNGGESLIKIIDDGSGVHPEDVEKAFNPHATSKIKDTYDIFSINTLGFRGEALPSIASIARVDFKSKTEDFDMGKELIISGGEKESLTDCSMNRGTQIEVRDLFFNVPARKKFLKTTARESALINDLVNRISLANPDVSFKLFNNNKKILNTYGNGKLIDVIRTIYGKSTAENLIYFEEHKDTASVYGFIGNDTLARASRNNQSLFVNKRYVKNRSLTVAVENAFRSFNVTGKFPFFVLFIDTYPELIDVNIHPTKSEIKFKDERFIFKVVFDAVHSAMREYVKDTFTLPEEEEKKFEALKEEVIQESLDKEISTLEKLKENINYKVSEDKKKEEIYSYNPSKDYEAKTEVNIPVDFLSKENQDESFSINNSLENNEFKEVSAKREISYDPILIKNELKDKVSESTSESLERSDYKCNKNEYGNSIEEIIYREAKFPKLRVIGQFNKTYILAEYDSTLYLIDQHAAHEKILFEKYSSDIAKKKVEIQPLMIPLVVTLPTEDYLYYDENKEIFEKAGFKISDFGDNSIRIEEVPYFLDKLNPTELITSMINNLKKMGTGETVEVKYNKIASMSCRAAVKANDVLSILEMENLIEDLRYINDPFHCPHGRPTIIKFTSYELDKKFKRIT</sequence>
<organism>
    <name type="scientific">Clostridium perfringens (strain 13 / Type A)</name>
    <dbReference type="NCBI Taxonomy" id="195102"/>
    <lineage>
        <taxon>Bacteria</taxon>
        <taxon>Bacillati</taxon>
        <taxon>Bacillota</taxon>
        <taxon>Clostridia</taxon>
        <taxon>Eubacteriales</taxon>
        <taxon>Clostridiaceae</taxon>
        <taxon>Clostridium</taxon>
    </lineage>
</organism>
<feature type="chain" id="PRO_0000177941" description="DNA mismatch repair protein MutL">
    <location>
        <begin position="1"/>
        <end position="674"/>
    </location>
</feature>
<protein>
    <recommendedName>
        <fullName evidence="1">DNA mismatch repair protein MutL</fullName>
    </recommendedName>
</protein>
<accession>Q8XL86</accession>
<keyword id="KW-0227">DNA damage</keyword>
<keyword id="KW-0234">DNA repair</keyword>
<keyword id="KW-1185">Reference proteome</keyword>
<name>MUTL_CLOPE</name>
<comment type="function">
    <text evidence="1">This protein is involved in the repair of mismatches in DNA. It is required for dam-dependent methyl-directed DNA mismatch repair. May act as a 'molecular matchmaker', a protein that promotes the formation of a stable complex between two or more DNA-binding proteins in an ATP-dependent manner without itself being part of a final effector complex.</text>
</comment>
<comment type="similarity">
    <text evidence="1">Belongs to the DNA mismatch repair MutL/HexB family.</text>
</comment>
<proteinExistence type="inferred from homology"/>